<name>73C11_BARVU</name>
<gene>
    <name evidence="4" type="primary">UGT73C11</name>
</gene>
<dbReference type="EC" id="2.4.1.368" evidence="3"/>
<dbReference type="EMBL" id="JQ291614">
    <property type="protein sequence ID" value="AFN26667.1"/>
    <property type="molecule type" value="Genomic_DNA"/>
</dbReference>
<dbReference type="SMR" id="K4GGT4"/>
<dbReference type="KEGG" id="ag:AFN26667"/>
<dbReference type="BRENDA" id="2.4.1.368">
    <property type="organism ID" value="16171"/>
</dbReference>
<dbReference type="GO" id="GO:0035251">
    <property type="term" value="F:UDP-glucosyltransferase activity"/>
    <property type="evidence" value="ECO:0000314"/>
    <property type="project" value="UniProtKB"/>
</dbReference>
<dbReference type="GO" id="GO:0016134">
    <property type="term" value="P:saponin metabolic process"/>
    <property type="evidence" value="ECO:0000314"/>
    <property type="project" value="UniProtKB"/>
</dbReference>
<dbReference type="CDD" id="cd03784">
    <property type="entry name" value="GT1_Gtf-like"/>
    <property type="match status" value="1"/>
</dbReference>
<dbReference type="FunFam" id="3.40.50.2000:FF:000047">
    <property type="entry name" value="Glycosyltransferase"/>
    <property type="match status" value="1"/>
</dbReference>
<dbReference type="FunFam" id="3.40.50.2000:FF:000071">
    <property type="entry name" value="Glycosyltransferase"/>
    <property type="match status" value="1"/>
</dbReference>
<dbReference type="Gene3D" id="3.40.50.2000">
    <property type="entry name" value="Glycogen Phosphorylase B"/>
    <property type="match status" value="2"/>
</dbReference>
<dbReference type="InterPro" id="IPR002213">
    <property type="entry name" value="UDP_glucos_trans"/>
</dbReference>
<dbReference type="InterPro" id="IPR035595">
    <property type="entry name" value="UDP_glycos_trans_CS"/>
</dbReference>
<dbReference type="PANTHER" id="PTHR48047">
    <property type="entry name" value="GLYCOSYLTRANSFERASE"/>
    <property type="match status" value="1"/>
</dbReference>
<dbReference type="PANTHER" id="PTHR48047:SF153">
    <property type="entry name" value="UDP-GLYCOSYLTRANSFERASE 73C5-RELATED"/>
    <property type="match status" value="1"/>
</dbReference>
<dbReference type="Pfam" id="PF00201">
    <property type="entry name" value="UDPGT"/>
    <property type="match status" value="1"/>
</dbReference>
<dbReference type="SUPFAM" id="SSF53756">
    <property type="entry name" value="UDP-Glycosyltransferase/glycogen phosphorylase"/>
    <property type="match status" value="1"/>
</dbReference>
<dbReference type="PROSITE" id="PS00375">
    <property type="entry name" value="UDPGT"/>
    <property type="match status" value="1"/>
</dbReference>
<reference key="1">
    <citation type="journal article" date="2012" name="Plant Physiol.">
        <title>UDP-glycosyltransferases from the UGT73C subfamily in Barbarea vulgaris catalyze sapogenin 3-O-glucosylation in saponin-mediated insect resistance.</title>
        <authorList>
            <person name="Augustin J.M."/>
            <person name="Drok S."/>
            <person name="Shinoda T."/>
            <person name="Sanmiya K."/>
            <person name="Nielsen J.K."/>
            <person name="Khakimov B."/>
            <person name="Olsen C.E."/>
            <person name="Hansen E.H."/>
            <person name="Kuzina V."/>
            <person name="Ekstrom C.T."/>
            <person name="Hauser T."/>
            <person name="Bak S."/>
        </authorList>
    </citation>
    <scope>NUCLEOTIDE SEQUENCE [GENOMIC DNA]</scope>
    <scope>FUNCTION</scope>
    <scope>CATALYTIC ACTIVITY</scope>
    <scope>BIOPHYSICOCHEMICAL PROPERTIES</scope>
</reference>
<protein>
    <recommendedName>
        <fullName evidence="4">UDP-glycosyltransferase 73C11</fullName>
        <ecNumber evidence="3">2.4.1.368</ecNumber>
    </recommendedName>
    <alternativeName>
        <fullName evidence="5">Oleanolate 3-O-glucosyltransferase UGT73C11</fullName>
    </alternativeName>
</protein>
<keyword id="KW-0328">Glycosyltransferase</keyword>
<keyword id="KW-0808">Transferase</keyword>
<feature type="chain" id="PRO_0000452129" description="UDP-glycosyltransferase 73C11">
    <location>
        <begin position="1"/>
        <end position="495"/>
    </location>
</feature>
<feature type="active site" description="Proton acceptor" evidence="1">
    <location>
        <position position="24"/>
    </location>
</feature>
<feature type="active site" description="Charge relay" evidence="1">
    <location>
        <position position="129"/>
    </location>
</feature>
<feature type="binding site" evidence="2">
    <location>
        <position position="24"/>
    </location>
    <ligand>
        <name>an anthocyanidin</name>
        <dbReference type="ChEBI" id="CHEBI:143576"/>
    </ligand>
</feature>
<feature type="binding site" evidence="1">
    <location>
        <position position="358"/>
    </location>
    <ligand>
        <name>UDP-alpha-D-glucose</name>
        <dbReference type="ChEBI" id="CHEBI:58885"/>
    </ligand>
</feature>
<feature type="binding site" evidence="1">
    <location>
        <position position="373"/>
    </location>
    <ligand>
        <name>UDP-alpha-D-glucose</name>
        <dbReference type="ChEBI" id="CHEBI:58885"/>
    </ligand>
</feature>
<feature type="binding site" evidence="1">
    <location>
        <position position="376"/>
    </location>
    <ligand>
        <name>UDP-alpha-D-glucose</name>
        <dbReference type="ChEBI" id="CHEBI:58885"/>
    </ligand>
</feature>
<feature type="binding site" evidence="1">
    <location>
        <position position="377"/>
    </location>
    <ligand>
        <name>UDP-alpha-D-glucose</name>
        <dbReference type="ChEBI" id="CHEBI:58885"/>
    </ligand>
</feature>
<feature type="binding site" evidence="1">
    <location>
        <position position="378"/>
    </location>
    <ligand>
        <name>UDP-alpha-D-glucose</name>
        <dbReference type="ChEBI" id="CHEBI:58885"/>
    </ligand>
</feature>
<feature type="binding site" evidence="1">
    <location>
        <position position="381"/>
    </location>
    <ligand>
        <name>UDP-alpha-D-glucose</name>
        <dbReference type="ChEBI" id="CHEBI:58885"/>
    </ligand>
</feature>
<feature type="binding site" evidence="2">
    <location>
        <position position="396"/>
    </location>
    <ligand>
        <name>an anthocyanidin</name>
        <dbReference type="ChEBI" id="CHEBI:143576"/>
    </ligand>
</feature>
<feature type="binding site" evidence="1">
    <location>
        <position position="397"/>
    </location>
    <ligand>
        <name>UDP-alpha-D-glucose</name>
        <dbReference type="ChEBI" id="CHEBI:58885"/>
    </ligand>
</feature>
<feature type="binding site" evidence="1">
    <location>
        <position position="398"/>
    </location>
    <ligand>
        <name>UDP-alpha-D-glucose</name>
        <dbReference type="ChEBI" id="CHEBI:58885"/>
    </ligand>
</feature>
<evidence type="ECO:0000250" key="1">
    <source>
        <dbReference type="UniProtKB" id="A0A0A1HA03"/>
    </source>
</evidence>
<evidence type="ECO:0000250" key="2">
    <source>
        <dbReference type="UniProtKB" id="P51094"/>
    </source>
</evidence>
<evidence type="ECO:0000269" key="3">
    <source>
    </source>
</evidence>
<evidence type="ECO:0000303" key="4">
    <source>
    </source>
</evidence>
<evidence type="ECO:0000305" key="5"/>
<accession>K4GGT4</accession>
<proteinExistence type="evidence at protein level"/>
<organism>
    <name type="scientific">Barbarea vulgaris</name>
    <name type="common">Yellow rocket</name>
    <name type="synonym">Erysimum barbarea</name>
    <dbReference type="NCBI Taxonomy" id="50459"/>
    <lineage>
        <taxon>Eukaryota</taxon>
        <taxon>Viridiplantae</taxon>
        <taxon>Streptophyta</taxon>
        <taxon>Embryophyta</taxon>
        <taxon>Tracheophyta</taxon>
        <taxon>Spermatophyta</taxon>
        <taxon>Magnoliopsida</taxon>
        <taxon>eudicotyledons</taxon>
        <taxon>Gunneridae</taxon>
        <taxon>Pentapetalae</taxon>
        <taxon>rosids</taxon>
        <taxon>malvids</taxon>
        <taxon>Brassicales</taxon>
        <taxon>Brassicaceae</taxon>
        <taxon>Cardamineae</taxon>
        <taxon>Barbarea</taxon>
    </lineage>
</organism>
<comment type="function">
    <text evidence="3">Catalyzes the transfer of a glucose (Glc) moiety from UDP-Glc to the C-3 position of the oleanane sapogenins oleanolate and hederagenin, and to the C-28 carboxylic group of the lupane sapogenin betulinate (PubMed:23027665). The monoglucosylated hederagenin 3-O-beta-D-glucoside is a feeding deterrent of the yellow-striped flea beetle (Phyllotreta nemorum) (PubMed:23027665).</text>
</comment>
<comment type="catalytic activity">
    <reaction evidence="3">
        <text>oleanolate + UDP-alpha-D-glucose = oleanolate 3-O-beta-D-glucoside + UDP + H(+)</text>
        <dbReference type="Rhea" id="RHEA:58024"/>
        <dbReference type="ChEBI" id="CHEBI:15378"/>
        <dbReference type="ChEBI" id="CHEBI:58223"/>
        <dbReference type="ChEBI" id="CHEBI:58885"/>
        <dbReference type="ChEBI" id="CHEBI:82828"/>
        <dbReference type="ChEBI" id="CHEBI:142488"/>
        <dbReference type="EC" id="2.4.1.368"/>
    </reaction>
    <physiologicalReaction direction="left-to-right" evidence="3">
        <dbReference type="Rhea" id="RHEA:58025"/>
    </physiologicalReaction>
</comment>
<comment type="biophysicochemical properties">
    <kinetics>
        <KM evidence="3">9.7 uM for oleanolate</KM>
        <KM evidence="3">3.3 uM for hederagenin</KM>
        <KM evidence="3">95 uM for UDP-glucose</KM>
        <Vmax evidence="3">817.0 nmol/min/mg enzyme with oleanolate as substrate</Vmax>
        <Vmax evidence="3">390.0 nmol/min/mg enzyme with hederagenin as substrate</Vmax>
        <text evidence="3">kcat is 0.023 sec(-1) with oleanolate as substrate (PubMed:23027665). kcat is 0.006 sec(-1) with hederagenin as substrate (PubMed:23027665).</text>
    </kinetics>
    <phDependence>
        <text evidence="3">Optimum pH is 8.6.</text>
    </phDependence>
</comment>
<comment type="similarity">
    <text evidence="5">Belongs to the UDP-glycosyltransferase family.</text>
</comment>
<sequence length="495" mass="55613">MVSEITHKSYPLHFVLFPFMAQGHMIPMVDIARLLAQRGVKITIVTTPHNAARFENVLSRAIESGLPISIVQVKLPSQEAGLPEGNETFDSLVSMELLVPFFKAVNMLEEPVQKLFEEMSPQPSCIISDFCLPYTSKIAKKFNIPKILFHGMCCFCLLCMHVLRKNREILENLKSDKEHFVVPYFPDRVEFTRPQVPMATYVPGEWHEIKEDIVEADKTSYGVIVNTYQELEPAYANDYKEARSGKAWTIGPVSLCNKVGADKAERGNKADIDQDECLKWLDSKEEGSVLYVCLGSICSLPLSQLKELGLGLEESQRPFIWVVRGWEKNKELLEWFSESGFEERVKDRGLLIKGWSPQMLILAHHSVGGFLTHCGWNSTLEGITSGIPLLTWPLFGDQFCNQKLVVQVLKVGVSAGVEEVTNWGEEEKIGVLVDKEGVKKAVEELMGESDDAKERRKRVKELGQLAQKAVEEGGSSHSNITSLLEDIMQLAQSNN</sequence>